<accession>B7UHG9</accession>
<keyword id="KW-0067">ATP-binding</keyword>
<keyword id="KW-0418">Kinase</keyword>
<keyword id="KW-0547">Nucleotide-binding</keyword>
<keyword id="KW-0597">Phosphoprotein</keyword>
<keyword id="KW-1185">Reference proteome</keyword>
<keyword id="KW-0808">Transferase</keyword>
<sequence>MALHDENVVWHSHPVTPQQREQHHGHRGVVLWFTGLSGSGKSTVAGALEEALHKLGVSTYLLDGDNVRHGLCSDLGFSDADRKENIRRVGEVANLMVEAGLVVLTAFISPHRAERQMVRERVGEGRFIEVFVDTPLAICEARDPKGLYKKARAGELRNFTGIDSVYEAPESAEIHLNGEQLVTNLVQQLLDLLRQNDIIRS</sequence>
<evidence type="ECO:0000255" key="1">
    <source>
        <dbReference type="HAMAP-Rule" id="MF_00065"/>
    </source>
</evidence>
<evidence type="ECO:0000256" key="2">
    <source>
        <dbReference type="SAM" id="MobiDB-lite"/>
    </source>
</evidence>
<comment type="function">
    <text evidence="1">Catalyzes the synthesis of activated sulfate.</text>
</comment>
<comment type="catalytic activity">
    <reaction evidence="1">
        <text>adenosine 5'-phosphosulfate + ATP = 3'-phosphoadenylyl sulfate + ADP + H(+)</text>
        <dbReference type="Rhea" id="RHEA:24152"/>
        <dbReference type="ChEBI" id="CHEBI:15378"/>
        <dbReference type="ChEBI" id="CHEBI:30616"/>
        <dbReference type="ChEBI" id="CHEBI:58243"/>
        <dbReference type="ChEBI" id="CHEBI:58339"/>
        <dbReference type="ChEBI" id="CHEBI:456216"/>
        <dbReference type="EC" id="2.7.1.25"/>
    </reaction>
</comment>
<comment type="pathway">
    <text evidence="1">Sulfur metabolism; hydrogen sulfide biosynthesis; sulfite from sulfate: step 2/3.</text>
</comment>
<comment type="similarity">
    <text evidence="1">Belongs to the APS kinase family.</text>
</comment>
<name>CYSC_ECO27</name>
<gene>
    <name evidence="1" type="primary">cysC</name>
    <name type="ordered locus">E2348C_3020</name>
</gene>
<protein>
    <recommendedName>
        <fullName evidence="1">Adenylyl-sulfate kinase</fullName>
        <ecNumber evidence="1">2.7.1.25</ecNumber>
    </recommendedName>
    <alternativeName>
        <fullName evidence="1">APS kinase</fullName>
    </alternativeName>
    <alternativeName>
        <fullName evidence="1">ATP adenosine-5'-phosphosulfate 3'-phosphotransferase</fullName>
    </alternativeName>
    <alternativeName>
        <fullName evidence="1">Adenosine-5'-phosphosulfate kinase</fullName>
    </alternativeName>
</protein>
<reference key="1">
    <citation type="journal article" date="2009" name="J. Bacteriol.">
        <title>Complete genome sequence and comparative genome analysis of enteropathogenic Escherichia coli O127:H6 strain E2348/69.</title>
        <authorList>
            <person name="Iguchi A."/>
            <person name="Thomson N.R."/>
            <person name="Ogura Y."/>
            <person name="Saunders D."/>
            <person name="Ooka T."/>
            <person name="Henderson I.R."/>
            <person name="Harris D."/>
            <person name="Asadulghani M."/>
            <person name="Kurokawa K."/>
            <person name="Dean P."/>
            <person name="Kenny B."/>
            <person name="Quail M.A."/>
            <person name="Thurston S."/>
            <person name="Dougan G."/>
            <person name="Hayashi T."/>
            <person name="Parkhill J."/>
            <person name="Frankel G."/>
        </authorList>
    </citation>
    <scope>NUCLEOTIDE SEQUENCE [LARGE SCALE GENOMIC DNA]</scope>
    <source>
        <strain>E2348/69 / EPEC</strain>
    </source>
</reference>
<dbReference type="EC" id="2.7.1.25" evidence="1"/>
<dbReference type="EMBL" id="FM180568">
    <property type="protein sequence ID" value="CAS10568.1"/>
    <property type="molecule type" value="Genomic_DNA"/>
</dbReference>
<dbReference type="RefSeq" id="WP_001173653.1">
    <property type="nucleotide sequence ID" value="NC_011601.1"/>
</dbReference>
<dbReference type="SMR" id="B7UHG9"/>
<dbReference type="KEGG" id="ecg:E2348C_3020"/>
<dbReference type="HOGENOM" id="CLU_046932_1_0_6"/>
<dbReference type="UniPathway" id="UPA00140">
    <property type="reaction ID" value="UER00205"/>
</dbReference>
<dbReference type="Proteomes" id="UP000008205">
    <property type="component" value="Chromosome"/>
</dbReference>
<dbReference type="GO" id="GO:0004020">
    <property type="term" value="F:adenylylsulfate kinase activity"/>
    <property type="evidence" value="ECO:0007669"/>
    <property type="project" value="UniProtKB-UniRule"/>
</dbReference>
<dbReference type="GO" id="GO:0005524">
    <property type="term" value="F:ATP binding"/>
    <property type="evidence" value="ECO:0007669"/>
    <property type="project" value="UniProtKB-UniRule"/>
</dbReference>
<dbReference type="GO" id="GO:0070814">
    <property type="term" value="P:hydrogen sulfide biosynthetic process"/>
    <property type="evidence" value="ECO:0007669"/>
    <property type="project" value="UniProtKB-UniRule"/>
</dbReference>
<dbReference type="GO" id="GO:0000103">
    <property type="term" value="P:sulfate assimilation"/>
    <property type="evidence" value="ECO:0007669"/>
    <property type="project" value="UniProtKB-UniRule"/>
</dbReference>
<dbReference type="CDD" id="cd02027">
    <property type="entry name" value="APSK"/>
    <property type="match status" value="1"/>
</dbReference>
<dbReference type="FunFam" id="3.40.50.300:FF:000212">
    <property type="entry name" value="Adenylyl-sulfate kinase"/>
    <property type="match status" value="1"/>
</dbReference>
<dbReference type="Gene3D" id="3.40.50.300">
    <property type="entry name" value="P-loop containing nucleotide triphosphate hydrolases"/>
    <property type="match status" value="1"/>
</dbReference>
<dbReference type="HAMAP" id="MF_00065">
    <property type="entry name" value="Adenylyl_sulf_kinase"/>
    <property type="match status" value="1"/>
</dbReference>
<dbReference type="InterPro" id="IPR002891">
    <property type="entry name" value="APS_kinase"/>
</dbReference>
<dbReference type="InterPro" id="IPR027417">
    <property type="entry name" value="P-loop_NTPase"/>
</dbReference>
<dbReference type="NCBIfam" id="TIGR00455">
    <property type="entry name" value="apsK"/>
    <property type="match status" value="1"/>
</dbReference>
<dbReference type="NCBIfam" id="NF003013">
    <property type="entry name" value="PRK03846.1"/>
    <property type="match status" value="1"/>
</dbReference>
<dbReference type="PANTHER" id="PTHR11055:SF63">
    <property type="entry name" value="ADENYLYL-SULFATE KINASE 1, CHLOROPLASTIC"/>
    <property type="match status" value="1"/>
</dbReference>
<dbReference type="PANTHER" id="PTHR11055">
    <property type="entry name" value="BIFUNCTIONAL 3'-PHOSPHOADENOSINE 5'-PHOSPHOSULFATE SYNTHASE"/>
    <property type="match status" value="1"/>
</dbReference>
<dbReference type="Pfam" id="PF01583">
    <property type="entry name" value="APS_kinase"/>
    <property type="match status" value="1"/>
</dbReference>
<dbReference type="SUPFAM" id="SSF52540">
    <property type="entry name" value="P-loop containing nucleoside triphosphate hydrolases"/>
    <property type="match status" value="1"/>
</dbReference>
<feature type="chain" id="PRO_1000117951" description="Adenylyl-sulfate kinase">
    <location>
        <begin position="1"/>
        <end position="201"/>
    </location>
</feature>
<feature type="region of interest" description="Disordered" evidence="2">
    <location>
        <begin position="1"/>
        <end position="23"/>
    </location>
</feature>
<feature type="active site" description="Phosphoserine intermediate" evidence="1">
    <location>
        <position position="109"/>
    </location>
</feature>
<feature type="binding site" evidence="1">
    <location>
        <begin position="35"/>
        <end position="42"/>
    </location>
    <ligand>
        <name>ATP</name>
        <dbReference type="ChEBI" id="CHEBI:30616"/>
    </ligand>
</feature>
<proteinExistence type="inferred from homology"/>
<organism>
    <name type="scientific">Escherichia coli O127:H6 (strain E2348/69 / EPEC)</name>
    <dbReference type="NCBI Taxonomy" id="574521"/>
    <lineage>
        <taxon>Bacteria</taxon>
        <taxon>Pseudomonadati</taxon>
        <taxon>Pseudomonadota</taxon>
        <taxon>Gammaproteobacteria</taxon>
        <taxon>Enterobacterales</taxon>
        <taxon>Enterobacteriaceae</taxon>
        <taxon>Escherichia</taxon>
    </lineage>
</organism>